<dbReference type="EC" id="2.2.1.1"/>
<dbReference type="EMBL" id="U09256">
    <property type="protein sequence ID" value="AAA18026.1"/>
    <property type="status" value="ALT_INIT"/>
    <property type="molecule type" value="mRNA"/>
</dbReference>
<dbReference type="RefSeq" id="NP_072114.1">
    <property type="nucleotide sequence ID" value="NM_022592.1"/>
</dbReference>
<dbReference type="SMR" id="P50137"/>
<dbReference type="BioGRID" id="249108">
    <property type="interactions" value="2"/>
</dbReference>
<dbReference type="FunCoup" id="P50137">
    <property type="interactions" value="1721"/>
</dbReference>
<dbReference type="IntAct" id="P50137">
    <property type="interactions" value="2"/>
</dbReference>
<dbReference type="MINT" id="P50137"/>
<dbReference type="STRING" id="10116.ENSRNOP00000021862"/>
<dbReference type="CarbonylDB" id="P50137"/>
<dbReference type="GlyGen" id="P50137">
    <property type="glycosylation" value="1 site, 1 O-linked glycan (1 site)"/>
</dbReference>
<dbReference type="iPTMnet" id="P50137"/>
<dbReference type="PhosphoSitePlus" id="P50137"/>
<dbReference type="jPOST" id="P50137"/>
<dbReference type="PaxDb" id="10116-ENSRNOP00000021862"/>
<dbReference type="PeptideAtlas" id="P50137"/>
<dbReference type="GeneID" id="64524"/>
<dbReference type="KEGG" id="rno:64524"/>
<dbReference type="UCSC" id="RGD:621036">
    <property type="organism name" value="rat"/>
</dbReference>
<dbReference type="AGR" id="RGD:621036"/>
<dbReference type="CTD" id="7086"/>
<dbReference type="RGD" id="621036">
    <property type="gene designation" value="Tkt"/>
</dbReference>
<dbReference type="eggNOG" id="KOG0523">
    <property type="taxonomic scope" value="Eukaryota"/>
</dbReference>
<dbReference type="InParanoid" id="P50137"/>
<dbReference type="OrthoDB" id="10267175at2759"/>
<dbReference type="PhylomeDB" id="P50137"/>
<dbReference type="Reactome" id="R-RNO-163754">
    <property type="pathway name" value="Insulin effects increased synthesis of Xylulose-5-Phosphate"/>
</dbReference>
<dbReference type="Reactome" id="R-RNO-71336">
    <property type="pathway name" value="Pentose phosphate pathway"/>
</dbReference>
<dbReference type="SABIO-RK" id="P50137"/>
<dbReference type="PRO" id="PR:P50137"/>
<dbReference type="Proteomes" id="UP000002494">
    <property type="component" value="Unplaced"/>
</dbReference>
<dbReference type="GO" id="GO:0005829">
    <property type="term" value="C:cytosol"/>
    <property type="evidence" value="ECO:0000266"/>
    <property type="project" value="RGD"/>
</dbReference>
<dbReference type="GO" id="GO:0005789">
    <property type="term" value="C:endoplasmic reticulum membrane"/>
    <property type="evidence" value="ECO:0000314"/>
    <property type="project" value="RGD"/>
</dbReference>
<dbReference type="GO" id="GO:0005777">
    <property type="term" value="C:peroxisome"/>
    <property type="evidence" value="ECO:0000314"/>
    <property type="project" value="RGD"/>
</dbReference>
<dbReference type="GO" id="GO:0005509">
    <property type="term" value="F:calcium ion binding"/>
    <property type="evidence" value="ECO:0000266"/>
    <property type="project" value="RGD"/>
</dbReference>
<dbReference type="GO" id="GO:0030246">
    <property type="term" value="F:carbohydrate binding"/>
    <property type="evidence" value="ECO:0000314"/>
    <property type="project" value="RGD"/>
</dbReference>
<dbReference type="GO" id="GO:0000287">
    <property type="term" value="F:magnesium ion binding"/>
    <property type="evidence" value="ECO:0000314"/>
    <property type="project" value="RGD"/>
</dbReference>
<dbReference type="GO" id="GO:0048029">
    <property type="term" value="F:monosaccharide binding"/>
    <property type="evidence" value="ECO:0000314"/>
    <property type="project" value="RGD"/>
</dbReference>
<dbReference type="GO" id="GO:0042803">
    <property type="term" value="F:protein homodimerization activity"/>
    <property type="evidence" value="ECO:0000266"/>
    <property type="project" value="RGD"/>
</dbReference>
<dbReference type="GO" id="GO:0030976">
    <property type="term" value="F:thiamine pyrophosphate binding"/>
    <property type="evidence" value="ECO:0000314"/>
    <property type="project" value="RGD"/>
</dbReference>
<dbReference type="GO" id="GO:0004802">
    <property type="term" value="F:transketolase activity"/>
    <property type="evidence" value="ECO:0000314"/>
    <property type="project" value="RGD"/>
</dbReference>
<dbReference type="GO" id="GO:0046166">
    <property type="term" value="P:glyceraldehyde-3-phosphate biosynthetic process"/>
    <property type="evidence" value="ECO:0000266"/>
    <property type="project" value="RGD"/>
</dbReference>
<dbReference type="GO" id="GO:0006098">
    <property type="term" value="P:pentose-phosphate shunt"/>
    <property type="evidence" value="ECO:0000314"/>
    <property type="project" value="RGD"/>
</dbReference>
<dbReference type="GO" id="GO:0009052">
    <property type="term" value="P:pentose-phosphate shunt, non-oxidative branch"/>
    <property type="evidence" value="ECO:0000314"/>
    <property type="project" value="RGD"/>
</dbReference>
<dbReference type="GO" id="GO:0040008">
    <property type="term" value="P:regulation of growth"/>
    <property type="evidence" value="ECO:0000266"/>
    <property type="project" value="RGD"/>
</dbReference>
<dbReference type="GO" id="GO:1901159">
    <property type="term" value="P:xylulose 5-phosphate biosynthetic process"/>
    <property type="evidence" value="ECO:0000266"/>
    <property type="project" value="RGD"/>
</dbReference>
<dbReference type="CDD" id="cd07033">
    <property type="entry name" value="TPP_PYR_DXS_TK_like"/>
    <property type="match status" value="1"/>
</dbReference>
<dbReference type="CDD" id="cd02012">
    <property type="entry name" value="TPP_TK"/>
    <property type="match status" value="1"/>
</dbReference>
<dbReference type="FunFam" id="3.40.50.970:FF:000028">
    <property type="entry name" value="Transketolase isoform 1"/>
    <property type="match status" value="1"/>
</dbReference>
<dbReference type="FunFam" id="3.40.50.970:FF:000033">
    <property type="entry name" value="Transketolase isoform 1"/>
    <property type="match status" value="1"/>
</dbReference>
<dbReference type="FunFam" id="3.40.50.920:FF:000008">
    <property type="entry name" value="transketolase isoform X2"/>
    <property type="match status" value="1"/>
</dbReference>
<dbReference type="Gene3D" id="3.40.50.920">
    <property type="match status" value="1"/>
</dbReference>
<dbReference type="Gene3D" id="3.40.50.970">
    <property type="match status" value="2"/>
</dbReference>
<dbReference type="InterPro" id="IPR029061">
    <property type="entry name" value="THDP-binding"/>
</dbReference>
<dbReference type="InterPro" id="IPR009014">
    <property type="entry name" value="Transketo_C/PFOR_II"/>
</dbReference>
<dbReference type="InterPro" id="IPR051424">
    <property type="entry name" value="Transketolase-like"/>
</dbReference>
<dbReference type="InterPro" id="IPR005475">
    <property type="entry name" value="Transketolase-like_Pyr-bd"/>
</dbReference>
<dbReference type="InterPro" id="IPR020826">
    <property type="entry name" value="Transketolase_BS"/>
</dbReference>
<dbReference type="InterPro" id="IPR033248">
    <property type="entry name" value="Transketolase_C"/>
</dbReference>
<dbReference type="InterPro" id="IPR049557">
    <property type="entry name" value="Transketolase_CS"/>
</dbReference>
<dbReference type="InterPro" id="IPR005474">
    <property type="entry name" value="Transketolase_N"/>
</dbReference>
<dbReference type="NCBIfam" id="NF004559">
    <property type="entry name" value="PRK05899.2-5"/>
    <property type="match status" value="1"/>
</dbReference>
<dbReference type="PANTHER" id="PTHR43195">
    <property type="entry name" value="TRANSKETOLASE"/>
    <property type="match status" value="1"/>
</dbReference>
<dbReference type="PANTHER" id="PTHR43195:SF3">
    <property type="entry name" value="TRANSKETOLASE"/>
    <property type="match status" value="1"/>
</dbReference>
<dbReference type="Pfam" id="PF02779">
    <property type="entry name" value="Transket_pyr"/>
    <property type="match status" value="1"/>
</dbReference>
<dbReference type="Pfam" id="PF02780">
    <property type="entry name" value="Transketolase_C"/>
    <property type="match status" value="1"/>
</dbReference>
<dbReference type="Pfam" id="PF00456">
    <property type="entry name" value="Transketolase_N"/>
    <property type="match status" value="1"/>
</dbReference>
<dbReference type="SMART" id="SM00861">
    <property type="entry name" value="Transket_pyr"/>
    <property type="match status" value="1"/>
</dbReference>
<dbReference type="SUPFAM" id="SSF52518">
    <property type="entry name" value="Thiamin diphosphate-binding fold (THDP-binding)"/>
    <property type="match status" value="2"/>
</dbReference>
<dbReference type="SUPFAM" id="SSF52922">
    <property type="entry name" value="TK C-terminal domain-like"/>
    <property type="match status" value="1"/>
</dbReference>
<dbReference type="PROSITE" id="PS00801">
    <property type="entry name" value="TRANSKETOLASE_1"/>
    <property type="match status" value="1"/>
</dbReference>
<dbReference type="PROSITE" id="PS00802">
    <property type="entry name" value="TRANSKETOLASE_2"/>
    <property type="match status" value="1"/>
</dbReference>
<protein>
    <recommendedName>
        <fullName>Transketolase</fullName>
        <shortName>TK</shortName>
        <ecNumber>2.2.1.1</ecNumber>
    </recommendedName>
</protein>
<proteinExistence type="evidence at protein level"/>
<gene>
    <name type="primary">Tkt</name>
</gene>
<comment type="function">
    <text evidence="1">Catalyzes the transfer of a two-carbon ketol group from a ketose donor to an aldose acceptor, via a covalent intermediate with the cofactor thiamine pyrophosphate.</text>
</comment>
<comment type="catalytic activity">
    <reaction>
        <text>D-sedoheptulose 7-phosphate + D-glyceraldehyde 3-phosphate = aldehydo-D-ribose 5-phosphate + D-xylulose 5-phosphate</text>
        <dbReference type="Rhea" id="RHEA:10508"/>
        <dbReference type="ChEBI" id="CHEBI:57483"/>
        <dbReference type="ChEBI" id="CHEBI:57737"/>
        <dbReference type="ChEBI" id="CHEBI:58273"/>
        <dbReference type="ChEBI" id="CHEBI:59776"/>
        <dbReference type="EC" id="2.2.1.1"/>
    </reaction>
</comment>
<comment type="cofactor">
    <cofactor evidence="1">
        <name>Mg(2+)</name>
        <dbReference type="ChEBI" id="CHEBI:18420"/>
    </cofactor>
    <cofactor evidence="1">
        <name>Ca(2+)</name>
        <dbReference type="ChEBI" id="CHEBI:29108"/>
    </cofactor>
    <cofactor evidence="1">
        <name>Mn(2+)</name>
        <dbReference type="ChEBI" id="CHEBI:29035"/>
    </cofactor>
    <cofactor evidence="1">
        <name>Co(2+)</name>
        <dbReference type="ChEBI" id="CHEBI:48828"/>
    </cofactor>
    <text evidence="1">Binds 1 Mg(2+) ion per subunit. Can also utilize other divalent metal cations, such as Ca(2+), Mn(2+) and Co(2+).</text>
</comment>
<comment type="cofactor">
    <cofactor evidence="1">
        <name>thiamine diphosphate</name>
        <dbReference type="ChEBI" id="CHEBI:58937"/>
    </cofactor>
    <text evidence="1">Binds 1 thiamine pyrophosphate per subunit.</text>
</comment>
<comment type="subunit">
    <text evidence="1">Homodimer.</text>
</comment>
<comment type="similarity">
    <text evidence="4">Belongs to the transketolase family.</text>
</comment>
<comment type="sequence caution" evidence="4">
    <conflict type="erroneous initiation">
        <sequence resource="EMBL-CDS" id="AAA18026"/>
    </conflict>
</comment>
<name>TKT_RAT</name>
<sequence length="623" mass="67644">MEGYHKPDQQKLQALKDTANRLRISSIQATTAAGSGHPTSCCSAAEIMAVLFFHTMRYKALDPRNPHNDRFVLSKGHAAPILYAVWAEAGFLPEAELLNLRKISSDLDGHPVPKQAFTDVATGSLGQGLGAACGMAYTGKYFDKASYRVYCMLGDGEVSEGSVWEAMAFAGIYKLDNLVAIFDINRLGQSDPAPLQHQVDVYQKRCEAFGWHAIIVDGHSVEELCKAFGQAKHQPTAIIAKTFKGRGITGIEDKEAWHGKPLPKNMAEQIIQEIYSQVQSKKKILATPPQEDAPSVDIANIRMPTPPNYKVGDKIATRKAYGLALAKLGHASDRIIALDGDTKNSTFSELFKKEHPDRFIECYIAEQNMVSIAVGCATRDRTVPFCSTFAAFFTRAFDQIRMAAISESNINLCGSHCGVSIGEDGPSQMALEDLAMFRSVPMSTVFYPSDGVATEKAVELAANTKGICFIRTSRPENAIIYSNNEDFQVGQAKVVLKSKDDQVTVIGAGVTLHEALAAAEMLKKEKIGVRVLDPFTIKPLDKKLILDCARATKGRILTVEDHYYEGGIGEAVSAVVVGEPGVTVTRLAVSQVPRSGKPAELLKMFGIDKDAIVQAVKGLVTKG</sequence>
<reference key="1">
    <citation type="submission" date="1994-04" db="EMBL/GenBank/DDBJ databases">
        <authorList>
            <person name="Kim S."/>
            <person name="Kim B."/>
            <person name="Jeng J."/>
            <person name="Song B.J."/>
        </authorList>
    </citation>
    <scope>NUCLEOTIDE SEQUENCE [MRNA]</scope>
    <source>
        <strain>Sprague-Dawley</strain>
        <tissue>Liver</tissue>
    </source>
</reference>
<reference key="2">
    <citation type="submission" date="2009-01" db="UniProtKB">
        <authorList>
            <person name="Lubec G."/>
            <person name="Afjehi-Sadat L."/>
            <person name="Chen W.-Q."/>
        </authorList>
    </citation>
    <scope>PROTEIN SEQUENCE OF 175-186; 284-302; 382-395; 472-493 AND 556-586</scope>
    <scope>IDENTIFICATION BY MASS SPECTROMETRY</scope>
    <source>
        <strain>Sprague-Dawley</strain>
        <tissue>Hippocampus</tissue>
        <tissue>Spinal cord</tissue>
    </source>
</reference>
<reference key="3">
    <citation type="journal article" date="2012" name="Nat. Commun.">
        <title>Quantitative maps of protein phosphorylation sites across 14 different rat organs and tissues.</title>
        <authorList>
            <person name="Lundby A."/>
            <person name="Secher A."/>
            <person name="Lage K."/>
            <person name="Nordsborg N.B."/>
            <person name="Dmytriyev A."/>
            <person name="Lundby C."/>
            <person name="Olsen J.V."/>
        </authorList>
    </citation>
    <scope>PHOSPHORYLATION [LARGE SCALE ANALYSIS] AT THR-287 AND SER-345</scope>
    <scope>IDENTIFICATION BY MASS SPECTROMETRY [LARGE SCALE ANALYSIS]</scope>
</reference>
<keyword id="KW-0007">Acetylation</keyword>
<keyword id="KW-0106">Calcium</keyword>
<keyword id="KW-0903">Direct protein sequencing</keyword>
<keyword id="KW-1017">Isopeptide bond</keyword>
<keyword id="KW-0460">Magnesium</keyword>
<keyword id="KW-0479">Metal-binding</keyword>
<keyword id="KW-0597">Phosphoprotein</keyword>
<keyword id="KW-1185">Reference proteome</keyword>
<keyword id="KW-0786">Thiamine pyrophosphate</keyword>
<keyword id="KW-0808">Transferase</keyword>
<keyword id="KW-0832">Ubl conjugation</keyword>
<feature type="chain" id="PRO_0000191898" description="Transketolase">
    <location>
        <begin position="1"/>
        <end position="623"/>
    </location>
</feature>
<feature type="active site" description="Proton donor" evidence="1">
    <location>
        <position position="366"/>
    </location>
</feature>
<feature type="binding site" evidence="1">
    <location>
        <position position="37"/>
    </location>
    <ligand>
        <name>substrate</name>
    </ligand>
</feature>
<feature type="binding site" evidence="1">
    <location>
        <position position="40"/>
    </location>
    <ligand>
        <name>thiamine diphosphate</name>
        <dbReference type="ChEBI" id="CHEBI:58937"/>
    </ligand>
</feature>
<feature type="binding site" evidence="1">
    <location>
        <position position="77"/>
    </location>
    <ligand>
        <name>thiamine diphosphate</name>
        <dbReference type="ChEBI" id="CHEBI:58937"/>
    </ligand>
</feature>
<feature type="binding site" evidence="1">
    <location>
        <begin position="123"/>
        <end position="125"/>
    </location>
    <ligand>
        <name>thiamine diphosphate</name>
        <dbReference type="ChEBI" id="CHEBI:58937"/>
    </ligand>
</feature>
<feature type="binding site" evidence="1">
    <location>
        <position position="155"/>
    </location>
    <ligand>
        <name>Mg(2+)</name>
        <dbReference type="ChEBI" id="CHEBI:18420"/>
    </ligand>
</feature>
<feature type="binding site" evidence="1">
    <location>
        <position position="156"/>
    </location>
    <ligand>
        <name>thiamine diphosphate</name>
        <dbReference type="ChEBI" id="CHEBI:58937"/>
    </ligand>
</feature>
<feature type="binding site" evidence="1">
    <location>
        <position position="185"/>
    </location>
    <ligand>
        <name>Mg(2+)</name>
        <dbReference type="ChEBI" id="CHEBI:18420"/>
    </ligand>
</feature>
<feature type="binding site" evidence="1">
    <location>
        <position position="185"/>
    </location>
    <ligand>
        <name>thiamine diphosphate</name>
        <dbReference type="ChEBI" id="CHEBI:58937"/>
    </ligand>
</feature>
<feature type="binding site" evidence="1">
    <location>
        <position position="187"/>
    </location>
    <ligand>
        <name>Mg(2+)</name>
        <dbReference type="ChEBI" id="CHEBI:18420"/>
    </ligand>
</feature>
<feature type="binding site" evidence="1">
    <location>
        <position position="244"/>
    </location>
    <ligand>
        <name>thiamine diphosphate</name>
        <dbReference type="ChEBI" id="CHEBI:58937"/>
    </ligand>
</feature>
<feature type="binding site" evidence="1">
    <location>
        <position position="258"/>
    </location>
    <ligand>
        <name>substrate</name>
    </ligand>
</feature>
<feature type="binding site" evidence="1">
    <location>
        <position position="258"/>
    </location>
    <ligand>
        <name>thiamine diphosphate</name>
        <dbReference type="ChEBI" id="CHEBI:58937"/>
    </ligand>
</feature>
<feature type="binding site" evidence="1">
    <location>
        <position position="318"/>
    </location>
    <ligand>
        <name>substrate</name>
    </ligand>
</feature>
<feature type="binding site" evidence="1">
    <location>
        <position position="345"/>
    </location>
    <ligand>
        <name>substrate</name>
    </ligand>
</feature>
<feature type="binding site" evidence="1">
    <location>
        <position position="392"/>
    </location>
    <ligand>
        <name>thiamine diphosphate</name>
        <dbReference type="ChEBI" id="CHEBI:58937"/>
    </ligand>
</feature>
<feature type="binding site" evidence="1">
    <location>
        <position position="416"/>
    </location>
    <ligand>
        <name>substrate</name>
    </ligand>
</feature>
<feature type="binding site" evidence="1">
    <location>
        <position position="424"/>
    </location>
    <ligand>
        <name>substrate</name>
    </ligand>
</feature>
<feature type="binding site" evidence="1">
    <location>
        <position position="428"/>
    </location>
    <ligand>
        <name>thiamine diphosphate</name>
        <dbReference type="ChEBI" id="CHEBI:58937"/>
    </ligand>
</feature>
<feature type="binding site" evidence="1">
    <location>
        <position position="474"/>
    </location>
    <ligand>
        <name>substrate</name>
    </ligand>
</feature>
<feature type="site" description="Important for catalytic activity" evidence="1">
    <location>
        <position position="37"/>
    </location>
</feature>
<feature type="site" description="Important for catalytic activity" evidence="1">
    <location>
        <position position="258"/>
    </location>
</feature>
<feature type="modified residue" description="N-acetylmethionine" evidence="2">
    <location>
        <position position="1"/>
    </location>
</feature>
<feature type="modified residue" description="N6-acetyllysine" evidence="2">
    <location>
        <position position="6"/>
    </location>
</feature>
<feature type="modified residue" description="N6-acetyllysine" evidence="2">
    <location>
        <position position="11"/>
    </location>
</feature>
<feature type="modified residue" description="Phosphoserine" evidence="2">
    <location>
        <position position="104"/>
    </location>
</feature>
<feature type="modified residue" description="N6-acetyllysine" evidence="2">
    <location>
        <position position="144"/>
    </location>
</feature>
<feature type="modified residue" description="N6-acetyllysine" evidence="2">
    <location>
        <position position="204"/>
    </location>
</feature>
<feature type="modified residue" description="N6-acetyllysine" evidence="3">
    <location>
        <position position="232"/>
    </location>
</feature>
<feature type="modified residue" description="N6-acetyllysine" evidence="2">
    <location>
        <position position="241"/>
    </location>
</feature>
<feature type="modified residue" description="N6-acetyllysine" evidence="2">
    <location>
        <position position="260"/>
    </location>
</feature>
<feature type="modified residue" description="Phosphotyrosine" evidence="2">
    <location>
        <position position="275"/>
    </location>
</feature>
<feature type="modified residue" description="Phosphothreonine" evidence="5">
    <location>
        <position position="287"/>
    </location>
</feature>
<feature type="modified residue" description="Phosphoserine" evidence="2">
    <location>
        <position position="295"/>
    </location>
</feature>
<feature type="modified residue" description="Phosphoserine" evidence="5">
    <location>
        <position position="345"/>
    </location>
</feature>
<feature type="modified residue" description="N6-acetyllysine" evidence="3">
    <location>
        <position position="538"/>
    </location>
</feature>
<feature type="modified residue" description="N6-acetyllysine" evidence="2">
    <location>
        <position position="603"/>
    </location>
</feature>
<feature type="cross-link" description="Glycyl lysine isopeptide (Lys-Gly) (interchain with G-Cter in SUMO2)" evidence="2">
    <location>
        <position position="352"/>
    </location>
</feature>
<organism>
    <name type="scientific">Rattus norvegicus</name>
    <name type="common">Rat</name>
    <dbReference type="NCBI Taxonomy" id="10116"/>
    <lineage>
        <taxon>Eukaryota</taxon>
        <taxon>Metazoa</taxon>
        <taxon>Chordata</taxon>
        <taxon>Craniata</taxon>
        <taxon>Vertebrata</taxon>
        <taxon>Euteleostomi</taxon>
        <taxon>Mammalia</taxon>
        <taxon>Eutheria</taxon>
        <taxon>Euarchontoglires</taxon>
        <taxon>Glires</taxon>
        <taxon>Rodentia</taxon>
        <taxon>Myomorpha</taxon>
        <taxon>Muroidea</taxon>
        <taxon>Muridae</taxon>
        <taxon>Murinae</taxon>
        <taxon>Rattus</taxon>
    </lineage>
</organism>
<accession>P50137</accession>
<evidence type="ECO:0000250" key="1"/>
<evidence type="ECO:0000250" key="2">
    <source>
        <dbReference type="UniProtKB" id="P29401"/>
    </source>
</evidence>
<evidence type="ECO:0000250" key="3">
    <source>
        <dbReference type="UniProtKB" id="P40142"/>
    </source>
</evidence>
<evidence type="ECO:0000305" key="4"/>
<evidence type="ECO:0007744" key="5">
    <source>
    </source>
</evidence>